<reference key="1">
    <citation type="journal article" date="2007" name="Genome Res.">
        <title>Genome characteristics of facultatively symbiotic Frankia sp. strains reflect host range and host plant biogeography.</title>
        <authorList>
            <person name="Normand P."/>
            <person name="Lapierre P."/>
            <person name="Tisa L.S."/>
            <person name="Gogarten J.P."/>
            <person name="Alloisio N."/>
            <person name="Bagnarol E."/>
            <person name="Bassi C.A."/>
            <person name="Berry A.M."/>
            <person name="Bickhart D.M."/>
            <person name="Choisne N."/>
            <person name="Couloux A."/>
            <person name="Cournoyer B."/>
            <person name="Cruveiller S."/>
            <person name="Daubin V."/>
            <person name="Demange N."/>
            <person name="Francino M.P."/>
            <person name="Goltsman E."/>
            <person name="Huang Y."/>
            <person name="Kopp O.R."/>
            <person name="Labarre L."/>
            <person name="Lapidus A."/>
            <person name="Lavire C."/>
            <person name="Marechal J."/>
            <person name="Martinez M."/>
            <person name="Mastronunzio J.E."/>
            <person name="Mullin B.C."/>
            <person name="Niemann J."/>
            <person name="Pujic P."/>
            <person name="Rawnsley T."/>
            <person name="Rouy Z."/>
            <person name="Schenowitz C."/>
            <person name="Sellstedt A."/>
            <person name="Tavares F."/>
            <person name="Tomkins J.P."/>
            <person name="Vallenet D."/>
            <person name="Valverde C."/>
            <person name="Wall L.G."/>
            <person name="Wang Y."/>
            <person name="Medigue C."/>
            <person name="Benson D.R."/>
        </authorList>
    </citation>
    <scope>NUCLEOTIDE SEQUENCE [LARGE SCALE GENOMIC DNA]</scope>
    <source>
        <strain>DSM 45818 / CECT 9043 / HFP020203 / CcI3</strain>
    </source>
</reference>
<accession>Q2JFE6</accession>
<evidence type="ECO:0000255" key="1">
    <source>
        <dbReference type="HAMAP-Rule" id="MF_00171"/>
    </source>
</evidence>
<organism>
    <name type="scientific">Frankia casuarinae (strain DSM 45818 / CECT 9043 / HFP020203 / CcI3)</name>
    <dbReference type="NCBI Taxonomy" id="106370"/>
    <lineage>
        <taxon>Bacteria</taxon>
        <taxon>Bacillati</taxon>
        <taxon>Actinomycetota</taxon>
        <taxon>Actinomycetes</taxon>
        <taxon>Frankiales</taxon>
        <taxon>Frankiaceae</taxon>
        <taxon>Frankia</taxon>
    </lineage>
</organism>
<name>TRUA_FRACC</name>
<keyword id="KW-0413">Isomerase</keyword>
<keyword id="KW-1185">Reference proteome</keyword>
<keyword id="KW-0819">tRNA processing</keyword>
<comment type="function">
    <text evidence="1">Formation of pseudouridine at positions 38, 39 and 40 in the anticodon stem and loop of transfer RNAs.</text>
</comment>
<comment type="catalytic activity">
    <reaction evidence="1">
        <text>uridine(38/39/40) in tRNA = pseudouridine(38/39/40) in tRNA</text>
        <dbReference type="Rhea" id="RHEA:22376"/>
        <dbReference type="Rhea" id="RHEA-COMP:10085"/>
        <dbReference type="Rhea" id="RHEA-COMP:10087"/>
        <dbReference type="ChEBI" id="CHEBI:65314"/>
        <dbReference type="ChEBI" id="CHEBI:65315"/>
        <dbReference type="EC" id="5.4.99.12"/>
    </reaction>
</comment>
<comment type="subunit">
    <text evidence="1">Homodimer.</text>
</comment>
<comment type="similarity">
    <text evidence="1">Belongs to the tRNA pseudouridine synthase TruA family.</text>
</comment>
<sequence>MTDGLVRLRLDLSYDGTPFAGWARQPGQRTVQGDVEDALMRVARLPAVRLTVAGRTDSGVHAVGQVAHVDLPDDVPLGGLARRLNGVLDRAVRIIGLAPAPPGFDARFSALSRRYVYRITDAPYGAEPLRRFDTLAWPRPLDVPAMAAAALFLVGEHDFAAFCRRREGATTVRTLLRLDVLRRPEGVVVADVEADAFCHSMVRALVGALLAVGEGRKPPQWPAAVLHRGVRDPAVTVAPAHGLTLVDVRYPPDPELAARAEVTRAVRIPPTPSG</sequence>
<gene>
    <name evidence="1" type="primary">truA</name>
    <name type="ordered locus">Francci3_0612</name>
</gene>
<proteinExistence type="inferred from homology"/>
<protein>
    <recommendedName>
        <fullName evidence="1">tRNA pseudouridine synthase A</fullName>
        <ecNumber evidence="1">5.4.99.12</ecNumber>
    </recommendedName>
    <alternativeName>
        <fullName evidence="1">tRNA pseudouridine(38-40) synthase</fullName>
    </alternativeName>
    <alternativeName>
        <fullName evidence="1">tRNA pseudouridylate synthase I</fullName>
    </alternativeName>
    <alternativeName>
        <fullName evidence="1">tRNA-uridine isomerase I</fullName>
    </alternativeName>
</protein>
<dbReference type="EC" id="5.4.99.12" evidence="1"/>
<dbReference type="EMBL" id="CP000249">
    <property type="protein sequence ID" value="ABD09996.1"/>
    <property type="molecule type" value="Genomic_DNA"/>
</dbReference>
<dbReference type="SMR" id="Q2JFE6"/>
<dbReference type="STRING" id="106370.Francci3_0612"/>
<dbReference type="KEGG" id="fra:Francci3_0612"/>
<dbReference type="eggNOG" id="COG0101">
    <property type="taxonomic scope" value="Bacteria"/>
</dbReference>
<dbReference type="HOGENOM" id="CLU_014673_0_2_11"/>
<dbReference type="PhylomeDB" id="Q2JFE6"/>
<dbReference type="Proteomes" id="UP000001937">
    <property type="component" value="Chromosome"/>
</dbReference>
<dbReference type="GO" id="GO:0003723">
    <property type="term" value="F:RNA binding"/>
    <property type="evidence" value="ECO:0007669"/>
    <property type="project" value="InterPro"/>
</dbReference>
<dbReference type="GO" id="GO:0160147">
    <property type="term" value="F:tRNA pseudouridine(38-40) synthase activity"/>
    <property type="evidence" value="ECO:0007669"/>
    <property type="project" value="UniProtKB-EC"/>
</dbReference>
<dbReference type="GO" id="GO:0031119">
    <property type="term" value="P:tRNA pseudouridine synthesis"/>
    <property type="evidence" value="ECO:0007669"/>
    <property type="project" value="UniProtKB-UniRule"/>
</dbReference>
<dbReference type="CDD" id="cd02570">
    <property type="entry name" value="PseudoU_synth_EcTruA"/>
    <property type="match status" value="1"/>
</dbReference>
<dbReference type="FunFam" id="3.30.70.660:FF:000003">
    <property type="entry name" value="tRNA pseudouridine synthase A"/>
    <property type="match status" value="1"/>
</dbReference>
<dbReference type="Gene3D" id="3.30.70.660">
    <property type="entry name" value="Pseudouridine synthase I, catalytic domain, C-terminal subdomain"/>
    <property type="match status" value="1"/>
</dbReference>
<dbReference type="Gene3D" id="3.30.70.580">
    <property type="entry name" value="Pseudouridine synthase I, catalytic domain, N-terminal subdomain"/>
    <property type="match status" value="1"/>
</dbReference>
<dbReference type="HAMAP" id="MF_00171">
    <property type="entry name" value="TruA"/>
    <property type="match status" value="1"/>
</dbReference>
<dbReference type="InterPro" id="IPR020103">
    <property type="entry name" value="PsdUridine_synth_cat_dom_sf"/>
</dbReference>
<dbReference type="InterPro" id="IPR001406">
    <property type="entry name" value="PsdUridine_synth_TruA"/>
</dbReference>
<dbReference type="InterPro" id="IPR020097">
    <property type="entry name" value="PsdUridine_synth_TruA_a/b_dom"/>
</dbReference>
<dbReference type="InterPro" id="IPR020095">
    <property type="entry name" value="PsdUridine_synth_TruA_C"/>
</dbReference>
<dbReference type="InterPro" id="IPR020094">
    <property type="entry name" value="TruA/RsuA/RluB/E/F_N"/>
</dbReference>
<dbReference type="NCBIfam" id="TIGR00071">
    <property type="entry name" value="hisT_truA"/>
    <property type="match status" value="1"/>
</dbReference>
<dbReference type="PANTHER" id="PTHR11142">
    <property type="entry name" value="PSEUDOURIDYLATE SYNTHASE"/>
    <property type="match status" value="1"/>
</dbReference>
<dbReference type="PANTHER" id="PTHR11142:SF0">
    <property type="entry name" value="TRNA PSEUDOURIDINE SYNTHASE-LIKE 1"/>
    <property type="match status" value="1"/>
</dbReference>
<dbReference type="Pfam" id="PF01416">
    <property type="entry name" value="PseudoU_synth_1"/>
    <property type="match status" value="1"/>
</dbReference>
<dbReference type="PIRSF" id="PIRSF001430">
    <property type="entry name" value="tRNA_psdUrid_synth"/>
    <property type="match status" value="1"/>
</dbReference>
<dbReference type="SUPFAM" id="SSF55120">
    <property type="entry name" value="Pseudouridine synthase"/>
    <property type="match status" value="1"/>
</dbReference>
<feature type="chain" id="PRO_1000058307" description="tRNA pseudouridine synthase A">
    <location>
        <begin position="1"/>
        <end position="274"/>
    </location>
</feature>
<feature type="active site" description="Nucleophile" evidence="1">
    <location>
        <position position="57"/>
    </location>
</feature>
<feature type="binding site" evidence="1">
    <location>
        <position position="115"/>
    </location>
    <ligand>
        <name>substrate</name>
    </ligand>
</feature>